<evidence type="ECO:0000255" key="1">
    <source>
        <dbReference type="HAMAP-Rule" id="MF_00685"/>
    </source>
</evidence>
<feature type="chain" id="PRO_0000188673" description="1,4-alpha-glucan branching enzyme GlgB">
    <location>
        <begin position="1"/>
        <end position="630"/>
    </location>
</feature>
<feature type="active site" description="Nucleophile" evidence="1">
    <location>
        <position position="311"/>
    </location>
</feature>
<feature type="active site" description="Proton donor" evidence="1">
    <location>
        <position position="362"/>
    </location>
</feature>
<reference key="1">
    <citation type="journal article" date="1998" name="Nature">
        <title>The complete genome of the hyperthermophilic bacterium Aquifex aeolicus.</title>
        <authorList>
            <person name="Deckert G."/>
            <person name="Warren P.V."/>
            <person name="Gaasterland T."/>
            <person name="Young W.G."/>
            <person name="Lenox A.L."/>
            <person name="Graham D.E."/>
            <person name="Overbeek R."/>
            <person name="Snead M.A."/>
            <person name="Keller M."/>
            <person name="Aujay M."/>
            <person name="Huber R."/>
            <person name="Feldman R.A."/>
            <person name="Short J.M."/>
            <person name="Olsen G.J."/>
            <person name="Swanson R.V."/>
        </authorList>
    </citation>
    <scope>NUCLEOTIDE SEQUENCE [LARGE SCALE GENOMIC DNA]</scope>
    <source>
        <strain>VF5</strain>
    </source>
</reference>
<keyword id="KW-0119">Carbohydrate metabolism</keyword>
<keyword id="KW-0320">Glycogen biosynthesis</keyword>
<keyword id="KW-0321">Glycogen metabolism</keyword>
<keyword id="KW-0328">Glycosyltransferase</keyword>
<keyword id="KW-1185">Reference proteome</keyword>
<keyword id="KW-0808">Transferase</keyword>
<dbReference type="EC" id="2.4.1.18" evidence="1"/>
<dbReference type="EMBL" id="AE000657">
    <property type="protein sequence ID" value="AAC06895.1"/>
    <property type="molecule type" value="Genomic_DNA"/>
</dbReference>
<dbReference type="PIR" id="D70363">
    <property type="entry name" value="D70363"/>
</dbReference>
<dbReference type="RefSeq" id="NP_213496.1">
    <property type="nucleotide sequence ID" value="NC_000918.1"/>
</dbReference>
<dbReference type="RefSeq" id="WP_010880434.1">
    <property type="nucleotide sequence ID" value="NC_000918.1"/>
</dbReference>
<dbReference type="SMR" id="O66936"/>
<dbReference type="FunCoup" id="O66936">
    <property type="interactions" value="369"/>
</dbReference>
<dbReference type="STRING" id="224324.aq_722"/>
<dbReference type="CAZy" id="CBM48">
    <property type="family name" value="Carbohydrate-Binding Module Family 48"/>
</dbReference>
<dbReference type="CAZy" id="GH13">
    <property type="family name" value="Glycoside Hydrolase Family 13"/>
</dbReference>
<dbReference type="EnsemblBacteria" id="AAC06895">
    <property type="protein sequence ID" value="AAC06895"/>
    <property type="gene ID" value="aq_722"/>
</dbReference>
<dbReference type="KEGG" id="aae:aq_722"/>
<dbReference type="PATRIC" id="fig|224324.8.peg.579"/>
<dbReference type="eggNOG" id="COG0296">
    <property type="taxonomic scope" value="Bacteria"/>
</dbReference>
<dbReference type="HOGENOM" id="CLU_004245_3_2_0"/>
<dbReference type="InParanoid" id="O66936"/>
<dbReference type="OrthoDB" id="9800174at2"/>
<dbReference type="BRENDA" id="2.4.1.18">
    <property type="organism ID" value="396"/>
</dbReference>
<dbReference type="UniPathway" id="UPA00164"/>
<dbReference type="Proteomes" id="UP000000798">
    <property type="component" value="Chromosome"/>
</dbReference>
<dbReference type="GO" id="GO:0005737">
    <property type="term" value="C:cytoplasm"/>
    <property type="evidence" value="ECO:0000318"/>
    <property type="project" value="GO_Central"/>
</dbReference>
<dbReference type="GO" id="GO:0005829">
    <property type="term" value="C:cytosol"/>
    <property type="evidence" value="ECO:0000318"/>
    <property type="project" value="GO_Central"/>
</dbReference>
<dbReference type="GO" id="GO:0003844">
    <property type="term" value="F:1,4-alpha-glucan branching enzyme activity"/>
    <property type="evidence" value="ECO:0000318"/>
    <property type="project" value="GO_Central"/>
</dbReference>
<dbReference type="GO" id="GO:0043169">
    <property type="term" value="F:cation binding"/>
    <property type="evidence" value="ECO:0007669"/>
    <property type="project" value="InterPro"/>
</dbReference>
<dbReference type="GO" id="GO:0004553">
    <property type="term" value="F:hydrolase activity, hydrolyzing O-glycosyl compounds"/>
    <property type="evidence" value="ECO:0007669"/>
    <property type="project" value="InterPro"/>
</dbReference>
<dbReference type="GO" id="GO:0005978">
    <property type="term" value="P:glycogen biosynthetic process"/>
    <property type="evidence" value="ECO:0000318"/>
    <property type="project" value="GO_Central"/>
</dbReference>
<dbReference type="CDD" id="cd11322">
    <property type="entry name" value="AmyAc_Glg_BE"/>
    <property type="match status" value="1"/>
</dbReference>
<dbReference type="CDD" id="cd02855">
    <property type="entry name" value="E_set_GBE_prok_N"/>
    <property type="match status" value="1"/>
</dbReference>
<dbReference type="FunFam" id="2.60.40.1180:FF:000002">
    <property type="entry name" value="1,4-alpha-glucan branching enzyme GlgB"/>
    <property type="match status" value="1"/>
</dbReference>
<dbReference type="FunFam" id="3.20.20.80:FF:000003">
    <property type="entry name" value="1,4-alpha-glucan branching enzyme GlgB"/>
    <property type="match status" value="1"/>
</dbReference>
<dbReference type="Gene3D" id="3.20.20.80">
    <property type="entry name" value="Glycosidases"/>
    <property type="match status" value="1"/>
</dbReference>
<dbReference type="Gene3D" id="2.60.40.1180">
    <property type="entry name" value="Golgi alpha-mannosidase II"/>
    <property type="match status" value="1"/>
</dbReference>
<dbReference type="Gene3D" id="2.60.40.10">
    <property type="entry name" value="Immunoglobulins"/>
    <property type="match status" value="1"/>
</dbReference>
<dbReference type="HAMAP" id="MF_00685">
    <property type="entry name" value="GlgB"/>
    <property type="match status" value="1"/>
</dbReference>
<dbReference type="InterPro" id="IPR006048">
    <property type="entry name" value="A-amylase/branching_C"/>
</dbReference>
<dbReference type="InterPro" id="IPR037439">
    <property type="entry name" value="Branching_enzy"/>
</dbReference>
<dbReference type="InterPro" id="IPR006407">
    <property type="entry name" value="GlgB"/>
</dbReference>
<dbReference type="InterPro" id="IPR044143">
    <property type="entry name" value="GlgB_N_E_set_prok"/>
</dbReference>
<dbReference type="InterPro" id="IPR006047">
    <property type="entry name" value="Glyco_hydro_13_cat_dom"/>
</dbReference>
<dbReference type="InterPro" id="IPR004193">
    <property type="entry name" value="Glyco_hydro_13_N"/>
</dbReference>
<dbReference type="InterPro" id="IPR013780">
    <property type="entry name" value="Glyco_hydro_b"/>
</dbReference>
<dbReference type="InterPro" id="IPR017853">
    <property type="entry name" value="Glycoside_hydrolase_SF"/>
</dbReference>
<dbReference type="InterPro" id="IPR013783">
    <property type="entry name" value="Ig-like_fold"/>
</dbReference>
<dbReference type="InterPro" id="IPR014756">
    <property type="entry name" value="Ig_E-set"/>
</dbReference>
<dbReference type="NCBIfam" id="TIGR01515">
    <property type="entry name" value="branching_enzym"/>
    <property type="match status" value="1"/>
</dbReference>
<dbReference type="NCBIfam" id="NF003811">
    <property type="entry name" value="PRK05402.1"/>
    <property type="match status" value="1"/>
</dbReference>
<dbReference type="NCBIfam" id="NF008967">
    <property type="entry name" value="PRK12313.1"/>
    <property type="match status" value="1"/>
</dbReference>
<dbReference type="PANTHER" id="PTHR43651">
    <property type="entry name" value="1,4-ALPHA-GLUCAN-BRANCHING ENZYME"/>
    <property type="match status" value="1"/>
</dbReference>
<dbReference type="PANTHER" id="PTHR43651:SF3">
    <property type="entry name" value="1,4-ALPHA-GLUCAN-BRANCHING ENZYME"/>
    <property type="match status" value="1"/>
</dbReference>
<dbReference type="Pfam" id="PF00128">
    <property type="entry name" value="Alpha-amylase"/>
    <property type="match status" value="2"/>
</dbReference>
<dbReference type="Pfam" id="PF02806">
    <property type="entry name" value="Alpha-amylase_C"/>
    <property type="match status" value="1"/>
</dbReference>
<dbReference type="Pfam" id="PF02922">
    <property type="entry name" value="CBM_48"/>
    <property type="match status" value="1"/>
</dbReference>
<dbReference type="PIRSF" id="PIRSF000463">
    <property type="entry name" value="GlgB"/>
    <property type="match status" value="1"/>
</dbReference>
<dbReference type="SMART" id="SM00642">
    <property type="entry name" value="Aamy"/>
    <property type="match status" value="1"/>
</dbReference>
<dbReference type="SUPFAM" id="SSF51445">
    <property type="entry name" value="(Trans)glycosidases"/>
    <property type="match status" value="1"/>
</dbReference>
<dbReference type="SUPFAM" id="SSF81296">
    <property type="entry name" value="E set domains"/>
    <property type="match status" value="1"/>
</dbReference>
<dbReference type="SUPFAM" id="SSF51011">
    <property type="entry name" value="Glycosyl hydrolase domain"/>
    <property type="match status" value="1"/>
</dbReference>
<sequence length="630" mass="74168">MKKFSLISDYDVYLFKEGTHTRLYDKLGSHVIELNGKRYTFFAVWAPHADYVSLIGDFNEWDKGSTPMVKREDGSGIWEVLLEGDLTGSKYKYFIKNGNYEVDKSDPFAFFCEQPPGNASVVWKLNYRWNDSEYMKKRKRVNSHDSPISIYEVHVGSWRRVPEEGNRFLSYRELAEYLPYYVKEMGFTHVEFLPVMEHPFYGSWGYQITGYFAPTSRYGTPQDFMYLIDKLHQEGIGVILDWVPSHFPTDAHGLAYFDGTHLYEYEDWRKRWHPDWNSFVFDYGKPEVRSFLLSSAHFWLDKYHADGLRVDAVASMLYLDYSRKEWVPNIYGGKENLEAIEFLRKFNESVYRNFPDVQTIAEESTAWPMVSRPTYVGGLGFGMKWNMGWMNDTLFYFSKDPIYRKYHHEVLTFSIWYAFSENFVLPLSHDEVVHGKGSLIGKMPGDYWQKFANLRALFGYMWAHPGKKLLFMGGEFGQFKEWDHETSLDWHLLEYPSHRGIQRLVKDLNEVYRREKALHETDFSPEGFEWVDFHDWEKSVISFLRKDKSGKEIILVVCNFTPVPRYDYRVGVPKGGYWREIMNTDAKEYWGSGMGNLGGKEADKIPWHGRKFSLSLTLPPLSVIYLKHEG</sequence>
<name>GLGB_AQUAE</name>
<gene>
    <name evidence="1" type="primary">glgB</name>
    <name type="ordered locus">aq_722</name>
</gene>
<proteinExistence type="inferred from homology"/>
<accession>O66936</accession>
<comment type="function">
    <text evidence="1">Catalyzes the formation of the alpha-1,6-glucosidic linkages in glycogen by scission of a 1,4-alpha-linked oligosaccharide from growing alpha-1,4-glucan chains and the subsequent attachment of the oligosaccharide to the alpha-1,6 position.</text>
</comment>
<comment type="catalytic activity">
    <reaction evidence="1">
        <text>Transfers a segment of a (1-&gt;4)-alpha-D-glucan chain to a primary hydroxy group in a similar glucan chain.</text>
        <dbReference type="EC" id="2.4.1.18"/>
    </reaction>
</comment>
<comment type="pathway">
    <text evidence="1">Glycan biosynthesis; glycogen biosynthesis.</text>
</comment>
<comment type="subunit">
    <text evidence="1">Monomer.</text>
</comment>
<comment type="similarity">
    <text evidence="1">Belongs to the glycosyl hydrolase 13 family. GlgB subfamily.</text>
</comment>
<organism>
    <name type="scientific">Aquifex aeolicus (strain VF5)</name>
    <dbReference type="NCBI Taxonomy" id="224324"/>
    <lineage>
        <taxon>Bacteria</taxon>
        <taxon>Pseudomonadati</taxon>
        <taxon>Aquificota</taxon>
        <taxon>Aquificia</taxon>
        <taxon>Aquificales</taxon>
        <taxon>Aquificaceae</taxon>
        <taxon>Aquifex</taxon>
    </lineage>
</organism>
<protein>
    <recommendedName>
        <fullName evidence="1">1,4-alpha-glucan branching enzyme GlgB</fullName>
        <ecNumber evidence="1">2.4.1.18</ecNumber>
    </recommendedName>
    <alternativeName>
        <fullName evidence="1">1,4-alpha-D-glucan:1,4-alpha-D-glucan 6-glucosyl-transferase</fullName>
    </alternativeName>
    <alternativeName>
        <fullName evidence="1">Alpha-(1-&gt;4)-glucan branching enzyme</fullName>
    </alternativeName>
    <alternativeName>
        <fullName evidence="1">Glycogen branching enzyme</fullName>
        <shortName evidence="1">BE</shortName>
    </alternativeName>
</protein>